<dbReference type="EMBL" id="AACS02000005">
    <property type="protein sequence ID" value="EAU84532.1"/>
    <property type="molecule type" value="Genomic_DNA"/>
</dbReference>
<dbReference type="RefSeq" id="XP_001836915.1">
    <property type="nucleotide sequence ID" value="XM_001836863.2"/>
</dbReference>
<dbReference type="STRING" id="240176.A8NWK4"/>
<dbReference type="GeneID" id="6013469"/>
<dbReference type="KEGG" id="cci:CC1G_00051"/>
<dbReference type="VEuPathDB" id="FungiDB:CC1G_00051"/>
<dbReference type="eggNOG" id="KOG4020">
    <property type="taxonomic scope" value="Eukaryota"/>
</dbReference>
<dbReference type="HOGENOM" id="CLU_054098_0_0_1"/>
<dbReference type="InParanoid" id="A8NWK4"/>
<dbReference type="OMA" id="CEPAVRG"/>
<dbReference type="OrthoDB" id="311633at2759"/>
<dbReference type="Proteomes" id="UP000001861">
    <property type="component" value="Unassembled WGS sequence"/>
</dbReference>
<dbReference type="GO" id="GO:0005758">
    <property type="term" value="C:mitochondrial intermembrane space"/>
    <property type="evidence" value="ECO:0007669"/>
    <property type="project" value="UniProtKB-SubCell"/>
</dbReference>
<dbReference type="GO" id="GO:0051537">
    <property type="term" value="F:2 iron, 2 sulfur cluster binding"/>
    <property type="evidence" value="ECO:0007669"/>
    <property type="project" value="UniProtKB-UniRule"/>
</dbReference>
<dbReference type="GO" id="GO:0051539">
    <property type="term" value="F:4 iron, 4 sulfur cluster binding"/>
    <property type="evidence" value="ECO:0007669"/>
    <property type="project" value="UniProtKB-KW"/>
</dbReference>
<dbReference type="GO" id="GO:0009055">
    <property type="term" value="F:electron transfer activity"/>
    <property type="evidence" value="ECO:0007669"/>
    <property type="project" value="UniProtKB-UniRule"/>
</dbReference>
<dbReference type="GO" id="GO:0046872">
    <property type="term" value="F:metal ion binding"/>
    <property type="evidence" value="ECO:0007669"/>
    <property type="project" value="UniProtKB-KW"/>
</dbReference>
<dbReference type="GO" id="GO:0016226">
    <property type="term" value="P:iron-sulfur cluster assembly"/>
    <property type="evidence" value="ECO:0007669"/>
    <property type="project" value="UniProtKB-UniRule"/>
</dbReference>
<dbReference type="HAMAP" id="MF_03115">
    <property type="entry name" value="Anamorsin"/>
    <property type="match status" value="1"/>
</dbReference>
<dbReference type="InterPro" id="IPR007785">
    <property type="entry name" value="Anamorsin"/>
</dbReference>
<dbReference type="InterPro" id="IPR046408">
    <property type="entry name" value="CIAPIN1"/>
</dbReference>
<dbReference type="InterPro" id="IPR031838">
    <property type="entry name" value="Dre2_N"/>
</dbReference>
<dbReference type="PANTHER" id="PTHR13273">
    <property type="entry name" value="ANAMORSIN"/>
    <property type="match status" value="1"/>
</dbReference>
<dbReference type="PANTHER" id="PTHR13273:SF14">
    <property type="entry name" value="ANAMORSIN"/>
    <property type="match status" value="1"/>
</dbReference>
<dbReference type="Pfam" id="PF05093">
    <property type="entry name" value="CIAPIN1"/>
    <property type="match status" value="1"/>
</dbReference>
<dbReference type="Pfam" id="PF16803">
    <property type="entry name" value="DRE2_N"/>
    <property type="match status" value="1"/>
</dbReference>
<proteinExistence type="inferred from homology"/>
<gene>
    <name evidence="1" type="primary">DRE2</name>
    <name type="ORF">CC1G_00051</name>
</gene>
<protein>
    <recommendedName>
        <fullName evidence="1">Fe-S cluster assembly protein DRE2</fullName>
    </recommendedName>
    <alternativeName>
        <fullName evidence="1">Anamorsin homolog</fullName>
    </alternativeName>
</protein>
<name>DRE2_COPC7</name>
<keyword id="KW-0001">2Fe-2S</keyword>
<keyword id="KW-0004">4Fe-4S</keyword>
<keyword id="KW-0963">Cytoplasm</keyword>
<keyword id="KW-0408">Iron</keyword>
<keyword id="KW-0411">Iron-sulfur</keyword>
<keyword id="KW-0479">Metal-binding</keyword>
<keyword id="KW-0496">Mitochondrion</keyword>
<keyword id="KW-1185">Reference proteome</keyword>
<feature type="chain" id="PRO_0000392386" description="Fe-S cluster assembly protein DRE2">
    <location>
        <begin position="1"/>
        <end position="352"/>
    </location>
</feature>
<feature type="region of interest" description="N-terminal SAM-like domain" evidence="1">
    <location>
        <begin position="1"/>
        <end position="196"/>
    </location>
</feature>
<feature type="region of interest" description="Disordered" evidence="2">
    <location>
        <begin position="1"/>
        <end position="24"/>
    </location>
</feature>
<feature type="region of interest" description="Linker" evidence="1">
    <location>
        <begin position="196"/>
        <end position="237"/>
    </location>
</feature>
<feature type="region of interest" description="Fe-S binding site A" evidence="1">
    <location>
        <begin position="243"/>
        <end position="262"/>
    </location>
</feature>
<feature type="region of interest" description="Fe-S binding site B" evidence="1">
    <location>
        <begin position="315"/>
        <end position="329"/>
    </location>
</feature>
<feature type="short sequence motif" description="Cx2C motif 1" evidence="1">
    <location>
        <begin position="315"/>
        <end position="318"/>
    </location>
</feature>
<feature type="short sequence motif" description="Cx2C motif 2" evidence="1">
    <location>
        <begin position="326"/>
        <end position="329"/>
    </location>
</feature>
<feature type="compositionally biased region" description="Polar residues" evidence="2">
    <location>
        <begin position="1"/>
        <end position="11"/>
    </location>
</feature>
<feature type="binding site" evidence="1">
    <location>
        <position position="243"/>
    </location>
    <ligand>
        <name>[2Fe-2S] cluster</name>
        <dbReference type="ChEBI" id="CHEBI:190135"/>
    </ligand>
</feature>
<feature type="binding site" evidence="1">
    <location>
        <position position="257"/>
    </location>
    <ligand>
        <name>[2Fe-2S] cluster</name>
        <dbReference type="ChEBI" id="CHEBI:190135"/>
    </ligand>
</feature>
<feature type="binding site" evidence="1">
    <location>
        <position position="260"/>
    </location>
    <ligand>
        <name>[2Fe-2S] cluster</name>
        <dbReference type="ChEBI" id="CHEBI:190135"/>
    </ligand>
</feature>
<feature type="binding site" evidence="1">
    <location>
        <position position="262"/>
    </location>
    <ligand>
        <name>[2Fe-2S] cluster</name>
        <dbReference type="ChEBI" id="CHEBI:190135"/>
    </ligand>
</feature>
<feature type="binding site" evidence="1">
    <location>
        <position position="315"/>
    </location>
    <ligand>
        <name>[4Fe-4S] cluster</name>
        <dbReference type="ChEBI" id="CHEBI:49883"/>
    </ligand>
</feature>
<feature type="binding site" evidence="1">
    <location>
        <position position="318"/>
    </location>
    <ligand>
        <name>[4Fe-4S] cluster</name>
        <dbReference type="ChEBI" id="CHEBI:49883"/>
    </ligand>
</feature>
<feature type="binding site" evidence="1">
    <location>
        <position position="326"/>
    </location>
    <ligand>
        <name>[4Fe-4S] cluster</name>
        <dbReference type="ChEBI" id="CHEBI:49883"/>
    </ligand>
</feature>
<feature type="binding site" evidence="1">
    <location>
        <position position="329"/>
    </location>
    <ligand>
        <name>[4Fe-4S] cluster</name>
        <dbReference type="ChEBI" id="CHEBI:49883"/>
    </ligand>
</feature>
<evidence type="ECO:0000255" key="1">
    <source>
        <dbReference type="HAMAP-Rule" id="MF_03115"/>
    </source>
</evidence>
<evidence type="ECO:0000256" key="2">
    <source>
        <dbReference type="SAM" id="MobiDB-lite"/>
    </source>
</evidence>
<sequence>MAPTAVYTQKDSPSSSQPSSKGPALAIGSLETAQDGKYQSLITELEATRQVDKLLLDRLVDGATTLEPSKYNSVHVTLASSDYQSLQESTLRSLLTQLLTGLTPLGTLHLLNLTDGLKTLPSELTLSGFLVLSAAGENPGDSIVAQKPAHAIGASVSLKKRGSATTTSTTAFVTTTTTTSTSTTTATVTSAPSVPLLLRKRGDPAKKKALWALTTDASASPSTKIDADALLTAEDKARPVPTCAPVDRSAPRRKKACKNCSCGLAELEEEEKRNAPVVVIDSSIDGEGGAKAVDKAERERLLEAAKNAPKATSSCGSCFLGDAFRCAGCPYLGLPAFKPGEKVEIDFGMDDF</sequence>
<accession>A8NWK4</accession>
<reference key="1">
    <citation type="journal article" date="2010" name="Proc. Natl. Acad. Sci. U.S.A.">
        <title>Insights into evolution of multicellular fungi from the assembled chromosomes of the mushroom Coprinopsis cinerea (Coprinus cinereus).</title>
        <authorList>
            <person name="Stajich J.E."/>
            <person name="Wilke S.K."/>
            <person name="Ahren D."/>
            <person name="Au C.H."/>
            <person name="Birren B.W."/>
            <person name="Borodovsky M."/>
            <person name="Burns C."/>
            <person name="Canbaeck B."/>
            <person name="Casselton L.A."/>
            <person name="Cheng C.K."/>
            <person name="Deng J."/>
            <person name="Dietrich F.S."/>
            <person name="Fargo D.C."/>
            <person name="Farman M.L."/>
            <person name="Gathman A.C."/>
            <person name="Goldberg J."/>
            <person name="Guigo R."/>
            <person name="Hoegger P.J."/>
            <person name="Hooker J.B."/>
            <person name="Huggins A."/>
            <person name="James T.Y."/>
            <person name="Kamada T."/>
            <person name="Kilaru S."/>
            <person name="Kodira C."/>
            <person name="Kuees U."/>
            <person name="Kupfer D."/>
            <person name="Kwan H.S."/>
            <person name="Lomsadze A."/>
            <person name="Li W."/>
            <person name="Lilly W.W."/>
            <person name="Ma L.-J."/>
            <person name="Mackey A.J."/>
            <person name="Manning G."/>
            <person name="Martin F."/>
            <person name="Muraguchi H."/>
            <person name="Natvig D.O."/>
            <person name="Palmerini H."/>
            <person name="Ramesh M.A."/>
            <person name="Rehmeyer C.J."/>
            <person name="Roe B.A."/>
            <person name="Shenoy N."/>
            <person name="Stanke M."/>
            <person name="Ter-Hovhannisyan V."/>
            <person name="Tunlid A."/>
            <person name="Velagapudi R."/>
            <person name="Vision T.J."/>
            <person name="Zeng Q."/>
            <person name="Zolan M.E."/>
            <person name="Pukkila P.J."/>
        </authorList>
    </citation>
    <scope>NUCLEOTIDE SEQUENCE [LARGE SCALE GENOMIC DNA]</scope>
    <source>
        <strain>Okayama-7 / 130 / ATCC MYA-4618 / FGSC 9003</strain>
    </source>
</reference>
<organism>
    <name type="scientific">Coprinopsis cinerea (strain Okayama-7 / 130 / ATCC MYA-4618 / FGSC 9003)</name>
    <name type="common">Inky cap fungus</name>
    <name type="synonym">Hormographiella aspergillata</name>
    <dbReference type="NCBI Taxonomy" id="240176"/>
    <lineage>
        <taxon>Eukaryota</taxon>
        <taxon>Fungi</taxon>
        <taxon>Dikarya</taxon>
        <taxon>Basidiomycota</taxon>
        <taxon>Agaricomycotina</taxon>
        <taxon>Agaricomycetes</taxon>
        <taxon>Agaricomycetidae</taxon>
        <taxon>Agaricales</taxon>
        <taxon>Agaricineae</taxon>
        <taxon>Psathyrellaceae</taxon>
        <taxon>Coprinopsis</taxon>
    </lineage>
</organism>
<comment type="function">
    <text evidence="1">Component of the cytosolic iron-sulfur (Fe-S) protein assembly (CIA) machinery required for the maturation of extramitochondrial Fe-S proteins. Part of an electron transfer chain functioning in an early step of cytosolic Fe-S biogenesis, facilitating the de novo assembly of a [4Fe-4S] cluster on the scaffold complex CFD1-NBP35. Electrons are transferred to DRE2 from NADPH via the FAD- and FMN-containing protein TAH18. TAH18-DRE2 are also required for the assembly of the diferric tyrosyl radical cofactor of ribonucleotide reductase (RNR), probably by providing electrons for reduction during radical cofactor maturation in the catalytic small subunit RNR2.</text>
</comment>
<comment type="cofactor">
    <cofactor evidence="1">
        <name>[2Fe-2S] cluster</name>
        <dbReference type="ChEBI" id="CHEBI:190135"/>
    </cofactor>
</comment>
<comment type="cofactor">
    <cofactor evidence="1">
        <name>[4Fe-4S] cluster</name>
        <dbReference type="ChEBI" id="CHEBI:49883"/>
    </cofactor>
</comment>
<comment type="subunit">
    <text evidence="1">Monomer. Interacts with TAH18. Interacts with MIA40.</text>
</comment>
<comment type="subcellular location">
    <subcellularLocation>
        <location evidence="1">Cytoplasm</location>
    </subcellularLocation>
    <subcellularLocation>
        <location evidence="1">Mitochondrion intermembrane space</location>
    </subcellularLocation>
</comment>
<comment type="domain">
    <text evidence="1">The C-terminal domain binds 2 Fe-S clusters but is otherwise mostly in an intrinsically disordered conformation.</text>
</comment>
<comment type="domain">
    <text evidence="1">The N-terminal domain has structural similarity with S-adenosyl-L-methionine-dependent methyltransferases, but does not bind S-adenosyl-L-methionine. It is required for correct assembly of the 2 Fe-S clusters.</text>
</comment>
<comment type="domain">
    <text evidence="1">The twin Cx2C motifs are involved in the recognition by the mitochondrial MIA40-ERV1 disulfide relay system. The formation of 2 disulfide bonds in the Cx2C motifs through dithiol/disulfide exchange reactions effectively traps the protein in the mitochondrial intermembrane space.</text>
</comment>
<comment type="similarity">
    <text evidence="1">Belongs to the anamorsin family.</text>
</comment>